<keyword id="KW-0025">Alternative splicing</keyword>
<keyword id="KW-0106">Calcium</keyword>
<keyword id="KW-0274">FAD</keyword>
<keyword id="KW-0285">Flavoprotein</keyword>
<keyword id="KW-0472">Membrane</keyword>
<keyword id="KW-0479">Metal-binding</keyword>
<keyword id="KW-0496">Mitochondrion</keyword>
<keyword id="KW-0999">Mitochondrion inner membrane</keyword>
<keyword id="KW-0520">NAD</keyword>
<keyword id="KW-0521">NADP</keyword>
<keyword id="KW-0560">Oxidoreductase</keyword>
<keyword id="KW-0576">Peroxisome</keyword>
<keyword id="KW-1185">Reference proteome</keyword>
<keyword id="KW-0809">Transit peptide</keyword>
<sequence>MRNFSVFERFSKAFKDHPSLTRILVVSTISGGGLIAYSEANASYGANGGAVVETGTKKKKVVLLGTGWAGTSFLKNLNNSQYEVQIISPRNYFAFTPLLPSVTCGTVEARSVVEPIRNIGRKNVDTSYLEAECFKIDPASKKVYCRSKQGLSSNGKKEFSVDYDYLVIATGAQSNTFNIPGVEENCHFLKEVEDAQRIRKTVIDSFEKASLPELSDEERKRILHFVVVGGGPTGVEFAAELHDFVTEDLVSLYPRAKGSVRITLLEAADHILTMFDKRITEFAEEKFSRDGIDVKLGSMVTKVNEKDISAKTKGGEVSSIPYGMIVWSTGIGTRPVIKDFMKQIGQGNRRALATDEWLRVEGTDNIYALGDCATINQRKVMEDVSAIFSKADKDKSGTLTLKEFQEAMDDICVRYPQVELYLKSKRMRGIADLLKEAETDDVSKNNIELKIEEFKSALSQVDSQVKFLPATAQVAAQQGAYLAKCFDRMEECEKSPEGPIRMRGEGRHRFRPFRYRHLGQFAPLGGEQTAAQLPGDWVSIGHSSQWLWYSVYASKQVSWRTRVLVVSDWMRRFIFGRDSSSI</sequence>
<reference key="1">
    <citation type="journal article" date="1999" name="Nature">
        <title>Sequence and analysis of chromosome 4 of the plant Arabidopsis thaliana.</title>
        <authorList>
            <person name="Mayer K.F.X."/>
            <person name="Schueller C."/>
            <person name="Wambutt R."/>
            <person name="Murphy G."/>
            <person name="Volckaert G."/>
            <person name="Pohl T."/>
            <person name="Duesterhoeft A."/>
            <person name="Stiekema W."/>
            <person name="Entian K.-D."/>
            <person name="Terryn N."/>
            <person name="Harris B."/>
            <person name="Ansorge W."/>
            <person name="Brandt P."/>
            <person name="Grivell L.A."/>
            <person name="Rieger M."/>
            <person name="Weichselgartner M."/>
            <person name="de Simone V."/>
            <person name="Obermaier B."/>
            <person name="Mache R."/>
            <person name="Mueller M."/>
            <person name="Kreis M."/>
            <person name="Delseny M."/>
            <person name="Puigdomenech P."/>
            <person name="Watson M."/>
            <person name="Schmidtheini T."/>
            <person name="Reichert B."/>
            <person name="Portetelle D."/>
            <person name="Perez-Alonso M."/>
            <person name="Boutry M."/>
            <person name="Bancroft I."/>
            <person name="Vos P."/>
            <person name="Hoheisel J."/>
            <person name="Zimmermann W."/>
            <person name="Wedler H."/>
            <person name="Ridley P."/>
            <person name="Langham S.-A."/>
            <person name="McCullagh B."/>
            <person name="Bilham L."/>
            <person name="Robben J."/>
            <person name="van der Schueren J."/>
            <person name="Grymonprez B."/>
            <person name="Chuang Y.-J."/>
            <person name="Vandenbussche F."/>
            <person name="Braeken M."/>
            <person name="Weltjens I."/>
            <person name="Voet M."/>
            <person name="Bastiaens I."/>
            <person name="Aert R."/>
            <person name="Defoor E."/>
            <person name="Weitzenegger T."/>
            <person name="Bothe G."/>
            <person name="Ramsperger U."/>
            <person name="Hilbert H."/>
            <person name="Braun M."/>
            <person name="Holzer E."/>
            <person name="Brandt A."/>
            <person name="Peters S."/>
            <person name="van Staveren M."/>
            <person name="Dirkse W."/>
            <person name="Mooijman P."/>
            <person name="Klein Lankhorst R."/>
            <person name="Rose M."/>
            <person name="Hauf J."/>
            <person name="Koetter P."/>
            <person name="Berneiser S."/>
            <person name="Hempel S."/>
            <person name="Feldpausch M."/>
            <person name="Lamberth S."/>
            <person name="Van den Daele H."/>
            <person name="De Keyser A."/>
            <person name="Buysshaert C."/>
            <person name="Gielen J."/>
            <person name="Villarroel R."/>
            <person name="De Clercq R."/>
            <person name="van Montagu M."/>
            <person name="Rogers J."/>
            <person name="Cronin A."/>
            <person name="Quail M.A."/>
            <person name="Bray-Allen S."/>
            <person name="Clark L."/>
            <person name="Doggett J."/>
            <person name="Hall S."/>
            <person name="Kay M."/>
            <person name="Lennard N."/>
            <person name="McLay K."/>
            <person name="Mayes R."/>
            <person name="Pettett A."/>
            <person name="Rajandream M.A."/>
            <person name="Lyne M."/>
            <person name="Benes V."/>
            <person name="Rechmann S."/>
            <person name="Borkova D."/>
            <person name="Bloecker H."/>
            <person name="Scharfe M."/>
            <person name="Grimm M."/>
            <person name="Loehnert T.-H."/>
            <person name="Dose S."/>
            <person name="de Haan M."/>
            <person name="Maarse A.C."/>
            <person name="Schaefer M."/>
            <person name="Mueller-Auer S."/>
            <person name="Gabel C."/>
            <person name="Fuchs M."/>
            <person name="Fartmann B."/>
            <person name="Granderath K."/>
            <person name="Dauner D."/>
            <person name="Herzl A."/>
            <person name="Neumann S."/>
            <person name="Argiriou A."/>
            <person name="Vitale D."/>
            <person name="Liguori R."/>
            <person name="Piravandi E."/>
            <person name="Massenet O."/>
            <person name="Quigley F."/>
            <person name="Clabauld G."/>
            <person name="Muendlein A."/>
            <person name="Felber R."/>
            <person name="Schnabl S."/>
            <person name="Hiller R."/>
            <person name="Schmidt W."/>
            <person name="Lecharny A."/>
            <person name="Aubourg S."/>
            <person name="Chefdor F."/>
            <person name="Cooke R."/>
            <person name="Berger C."/>
            <person name="Monfort A."/>
            <person name="Casacuberta E."/>
            <person name="Gibbons T."/>
            <person name="Weber N."/>
            <person name="Vandenbol M."/>
            <person name="Bargues M."/>
            <person name="Terol J."/>
            <person name="Torres A."/>
            <person name="Perez-Perez A."/>
            <person name="Purnelle B."/>
            <person name="Bent E."/>
            <person name="Johnson S."/>
            <person name="Tacon D."/>
            <person name="Jesse T."/>
            <person name="Heijnen L."/>
            <person name="Schwarz S."/>
            <person name="Scholler P."/>
            <person name="Heber S."/>
            <person name="Francs P."/>
            <person name="Bielke C."/>
            <person name="Frishman D."/>
            <person name="Haase D."/>
            <person name="Lemcke K."/>
            <person name="Mewes H.-W."/>
            <person name="Stocker S."/>
            <person name="Zaccaria P."/>
            <person name="Bevan M."/>
            <person name="Wilson R.K."/>
            <person name="de la Bastide M."/>
            <person name="Habermann K."/>
            <person name="Parnell L."/>
            <person name="Dedhia N."/>
            <person name="Gnoj L."/>
            <person name="Schutz K."/>
            <person name="Huang E."/>
            <person name="Spiegel L."/>
            <person name="Sekhon M."/>
            <person name="Murray J."/>
            <person name="Sheet P."/>
            <person name="Cordes M."/>
            <person name="Abu-Threideh J."/>
            <person name="Stoneking T."/>
            <person name="Kalicki J."/>
            <person name="Graves T."/>
            <person name="Harmon G."/>
            <person name="Edwards J."/>
            <person name="Latreille P."/>
            <person name="Courtney L."/>
            <person name="Cloud J."/>
            <person name="Abbott A."/>
            <person name="Scott K."/>
            <person name="Johnson D."/>
            <person name="Minx P."/>
            <person name="Bentley D."/>
            <person name="Fulton B."/>
            <person name="Miller N."/>
            <person name="Greco T."/>
            <person name="Kemp K."/>
            <person name="Kramer J."/>
            <person name="Fulton L."/>
            <person name="Mardis E."/>
            <person name="Dante M."/>
            <person name="Pepin K."/>
            <person name="Hillier L.W."/>
            <person name="Nelson J."/>
            <person name="Spieth J."/>
            <person name="Ryan E."/>
            <person name="Andrews S."/>
            <person name="Geisel C."/>
            <person name="Layman D."/>
            <person name="Du H."/>
            <person name="Ali J."/>
            <person name="Berghoff A."/>
            <person name="Jones K."/>
            <person name="Drone K."/>
            <person name="Cotton M."/>
            <person name="Joshu C."/>
            <person name="Antonoiu B."/>
            <person name="Zidanic M."/>
            <person name="Strong C."/>
            <person name="Sun H."/>
            <person name="Lamar B."/>
            <person name="Yordan C."/>
            <person name="Ma P."/>
            <person name="Zhong J."/>
            <person name="Preston R."/>
            <person name="Vil D."/>
            <person name="Shekher M."/>
            <person name="Matero A."/>
            <person name="Shah R."/>
            <person name="Swaby I.K."/>
            <person name="O'Shaughnessy A."/>
            <person name="Rodriguez M."/>
            <person name="Hoffman J."/>
            <person name="Till S."/>
            <person name="Granat S."/>
            <person name="Shohdy N."/>
            <person name="Hasegawa A."/>
            <person name="Hameed A."/>
            <person name="Lodhi M."/>
            <person name="Johnson A."/>
            <person name="Chen E."/>
            <person name="Marra M.A."/>
            <person name="Martienssen R."/>
            <person name="McCombie W.R."/>
        </authorList>
    </citation>
    <scope>NUCLEOTIDE SEQUENCE [LARGE SCALE GENOMIC DNA]</scope>
    <source>
        <strain>cv. Columbia</strain>
    </source>
</reference>
<reference key="2">
    <citation type="journal article" date="2017" name="Plant J.">
        <title>Araport11: a complete reannotation of the Arabidopsis thaliana reference genome.</title>
        <authorList>
            <person name="Cheng C.Y."/>
            <person name="Krishnakumar V."/>
            <person name="Chan A.P."/>
            <person name="Thibaud-Nissen F."/>
            <person name="Schobel S."/>
            <person name="Town C.D."/>
        </authorList>
    </citation>
    <scope>GENOME REANNOTATION</scope>
    <source>
        <strain>cv. Columbia</strain>
    </source>
</reference>
<reference key="3">
    <citation type="journal article" date="2003" name="Science">
        <title>Empirical analysis of transcriptional activity in the Arabidopsis genome.</title>
        <authorList>
            <person name="Yamada K."/>
            <person name="Lim J."/>
            <person name="Dale J.M."/>
            <person name="Chen H."/>
            <person name="Shinn P."/>
            <person name="Palm C.J."/>
            <person name="Southwick A.M."/>
            <person name="Wu H.C."/>
            <person name="Kim C.J."/>
            <person name="Nguyen M."/>
            <person name="Pham P.K."/>
            <person name="Cheuk R.F."/>
            <person name="Karlin-Newmann G."/>
            <person name="Liu S.X."/>
            <person name="Lam B."/>
            <person name="Sakano H."/>
            <person name="Wu T."/>
            <person name="Yu G."/>
            <person name="Miranda M."/>
            <person name="Quach H.L."/>
            <person name="Tripp M."/>
            <person name="Chang C.H."/>
            <person name="Lee J.M."/>
            <person name="Toriumi M.J."/>
            <person name="Chan M.M."/>
            <person name="Tang C.C."/>
            <person name="Onodera C.S."/>
            <person name="Deng J.M."/>
            <person name="Akiyama K."/>
            <person name="Ansari Y."/>
            <person name="Arakawa T."/>
            <person name="Banh J."/>
            <person name="Banno F."/>
            <person name="Bowser L."/>
            <person name="Brooks S.Y."/>
            <person name="Carninci P."/>
            <person name="Chao Q."/>
            <person name="Choy N."/>
            <person name="Enju A."/>
            <person name="Goldsmith A.D."/>
            <person name="Gurjal M."/>
            <person name="Hansen N.F."/>
            <person name="Hayashizaki Y."/>
            <person name="Johnson-Hopson C."/>
            <person name="Hsuan V.W."/>
            <person name="Iida K."/>
            <person name="Karnes M."/>
            <person name="Khan S."/>
            <person name="Koesema E."/>
            <person name="Ishida J."/>
            <person name="Jiang P.X."/>
            <person name="Jones T."/>
            <person name="Kawai J."/>
            <person name="Kamiya A."/>
            <person name="Meyers C."/>
            <person name="Nakajima M."/>
            <person name="Narusaka M."/>
            <person name="Seki M."/>
            <person name="Sakurai T."/>
            <person name="Satou M."/>
            <person name="Tamse R."/>
            <person name="Vaysberg M."/>
            <person name="Wallender E.K."/>
            <person name="Wong C."/>
            <person name="Yamamura Y."/>
            <person name="Yuan S."/>
            <person name="Shinozaki K."/>
            <person name="Davis R.W."/>
            <person name="Theologis A."/>
            <person name="Ecker J.R."/>
        </authorList>
    </citation>
    <scope>NUCLEOTIDE SEQUENCE [LARGE SCALE MRNA]</scope>
    <source>
        <strain>cv. Columbia</strain>
    </source>
</reference>
<reference key="4">
    <citation type="journal article" date="2003" name="Plant Physiol.">
        <title>Arabidopsis genes encoding mitochondrial type II NAD(P)H dehydrogenases have different evolutionary origin and show distinct responses to light.</title>
        <authorList>
            <person name="Michalecka A.M."/>
            <person name="Svensson A.S."/>
            <person name="Johansson F.I."/>
            <person name="Agius S.C."/>
            <person name="Johanson U."/>
            <person name="Brennicke A."/>
            <person name="Binder S."/>
            <person name="Rasmusson A.G."/>
        </authorList>
    </citation>
    <scope>SUBCELLULAR LOCATION</scope>
    <scope>TISSUE SPECIFICITY</scope>
</reference>
<reference key="5">
    <citation type="journal article" date="2004" name="Annu. Rev. Plant Biol.">
        <title>Alternative NAD(P)H dehydrogenases of plant mitochondria.</title>
        <authorList>
            <person name="Rasmusson A.G."/>
            <person name="Soole K.L."/>
            <person name="Elthon T.E."/>
        </authorList>
    </citation>
    <scope>REVIEW</scope>
</reference>
<reference key="6">
    <citation type="journal article" date="2004" name="Plant Cell">
        <title>Experimental analysis of the Arabidopsis mitochondrial proteome highlights signaling and regulatory components, provides assessment of targeting prediction programs, and indicates plant-specific mitochondrial proteins.</title>
        <authorList>
            <person name="Heazlewood J.L."/>
            <person name="Tonti-Filippini J.S."/>
            <person name="Gout A.M."/>
            <person name="Day D.A."/>
            <person name="Whelan J."/>
            <person name="Millar A.H."/>
        </authorList>
    </citation>
    <scope>IDENTIFICATION BY MASS SPECTROMETRY</scope>
    <scope>SUBCELLULAR LOCATION [LARGE SCALE ANALYSIS]</scope>
    <source>
        <strain>cv. Landsberg erecta</strain>
    </source>
</reference>
<reference key="7">
    <citation type="journal article" date="2005" name="Plant Mol. Biol.">
        <title>Stress-induced co-expression of alternative respiratory chain components in Arabidopsis thaliana.</title>
        <authorList>
            <person name="Clifton R."/>
            <person name="Lister R."/>
            <person name="Parker K.L."/>
            <person name="Sappl P.G."/>
            <person name="Elhafez D."/>
            <person name="Millar A.H."/>
            <person name="Day D.A."/>
            <person name="Whelan J."/>
        </authorList>
    </citation>
    <scope>INDUCTION BY ABIOTIC STRESSES</scope>
</reference>
<reference key="8">
    <citation type="journal article" date="2006" name="Plant Cell Physiol.">
        <title>Characterization of mitochondrial alternative NAD(P)H dehydrogenases in Arabidopsis: intraorganelle location and expression.</title>
        <authorList>
            <person name="Elhafez D."/>
            <person name="Murcha M.W."/>
            <person name="Clifton R."/>
            <person name="Soole K.L."/>
            <person name="Day D.A."/>
            <person name="Whelan J."/>
        </authorList>
    </citation>
    <scope>SUBCELLULAR LOCATION</scope>
    <scope>TISSUE SPECIFICITY</scope>
    <scope>INDUCTION BY LIGHT</scope>
    <source>
        <strain>cv. Columbia</strain>
    </source>
</reference>
<reference key="9">
    <citation type="journal article" date="2007" name="J. Biol. Chem.">
        <title>Ca2+-binding and Ca2+-independent respiratory NADH and NADPH dehydrogenases of Arabidopsis thaliana.</title>
        <authorList>
            <person name="Geisler D.A."/>
            <person name="Broselid C."/>
            <person name="Hederstedt L."/>
            <person name="Rasmusson A.G."/>
        </authorList>
    </citation>
    <scope>FUNCTION</scope>
    <scope>CALCIUM-BINDING</scope>
    <scope>ACTIVITY REGULATION</scope>
    <scope>BIOPHYSICOCHEMICAL PROPERTIES</scope>
</reference>
<reference key="10">
    <citation type="journal article" date="2008" name="FEBS Lett.">
        <title>Type II NAD(P)H dehydrogenases are targeted to mitochondria and chloroplasts or peroxisomes in Arabidopsis thaliana.</title>
        <authorList>
            <person name="Carrie C."/>
            <person name="Murcha M.W."/>
            <person name="Kuehn K."/>
            <person name="Duncan O."/>
            <person name="Barthet M."/>
            <person name="Smith P.M."/>
            <person name="Eubel H."/>
            <person name="Meyer E."/>
            <person name="Day D.A."/>
            <person name="Millar A.H."/>
            <person name="Whelan J."/>
        </authorList>
    </citation>
    <scope>SUBCELLULAR LOCATION</scope>
</reference>
<reference key="11">
    <citation type="journal article" date="2011" name="Plant Physiol.">
        <title>Defining the protein complex proteome of plant mitochondria.</title>
        <authorList>
            <person name="Klodmann J."/>
            <person name="Senkler M."/>
            <person name="Rode C."/>
            <person name="Braun H.-P."/>
        </authorList>
    </citation>
    <scope>IDENTIFICATION BY MASS SPECTROMETRY</scope>
    <scope>SUBCELLULAR LOCATION [LARGE SCALE ANALYSIS]</scope>
</reference>
<reference key="12">
    <citation type="journal article" date="2012" name="BMB Rep.">
        <title>Arabidopsis SIZ1 positively regulates alternative respiratory bypass pathways.</title>
        <authorList>
            <person name="Park B.S."/>
            <person name="Kim S.-I."/>
            <person name="Song J.T."/>
            <person name="Seo H.S."/>
        </authorList>
    </citation>
    <scope>INDUCTION BY AMMONIUM AND NITRATE</scope>
</reference>
<protein>
    <recommendedName>
        <fullName>External alternative NAD(P)H-ubiquinone oxidoreductase B2, mitochondrial</fullName>
        <ecNumber>1.6.5.9</ecNumber>
    </recommendedName>
    <alternativeName>
        <fullName>External alternative NADH dehydrogenase NDB2</fullName>
    </alternativeName>
    <alternativeName>
        <fullName>NADH:ubiquinone reductase (non-electrogenic) NDB2</fullName>
    </alternativeName>
</protein>
<proteinExistence type="evidence at protein level"/>
<accession>Q94BV7</accession>
<accession>Q9S9T5</accession>
<dbReference type="EC" id="1.6.5.9"/>
<dbReference type="EMBL" id="AF162444">
    <property type="protein sequence ID" value="AAD48975.1"/>
    <property type="status" value="ALT_SEQ"/>
    <property type="molecule type" value="Genomic_DNA"/>
</dbReference>
<dbReference type="EMBL" id="AL161502">
    <property type="protein sequence ID" value="CAB81044.1"/>
    <property type="status" value="ALT_SEQ"/>
    <property type="molecule type" value="Genomic_DNA"/>
</dbReference>
<dbReference type="EMBL" id="CP002687">
    <property type="protein sequence ID" value="AEE82460.1"/>
    <property type="molecule type" value="Genomic_DNA"/>
</dbReference>
<dbReference type="EMBL" id="AY039856">
    <property type="protein sequence ID" value="AAK63960.1"/>
    <property type="molecule type" value="mRNA"/>
</dbReference>
<dbReference type="EMBL" id="BT002241">
    <property type="protein sequence ID" value="AAN72252.1"/>
    <property type="molecule type" value="mRNA"/>
</dbReference>
<dbReference type="PIR" id="B85063">
    <property type="entry name" value="B85063"/>
</dbReference>
<dbReference type="RefSeq" id="NP_567283.1">
    <molecule id="Q94BV7-1"/>
    <property type="nucleotide sequence ID" value="NM_116741.4"/>
</dbReference>
<dbReference type="SMR" id="Q94BV7"/>
<dbReference type="FunCoup" id="Q94BV7">
    <property type="interactions" value="321"/>
</dbReference>
<dbReference type="STRING" id="3702.Q94BV7"/>
<dbReference type="GlyGen" id="Q94BV7">
    <property type="glycosylation" value="1 site"/>
</dbReference>
<dbReference type="SwissPalm" id="Q94BV7"/>
<dbReference type="PaxDb" id="3702-AT4G05020.2"/>
<dbReference type="ProteomicsDB" id="251099">
    <molecule id="Q94BV7-1"/>
</dbReference>
<dbReference type="EnsemblPlants" id="AT4G05020.1">
    <molecule id="Q94BV7-1"/>
    <property type="protein sequence ID" value="AT4G05020.1"/>
    <property type="gene ID" value="AT4G05020"/>
</dbReference>
<dbReference type="GeneID" id="825844"/>
<dbReference type="Gramene" id="AT4G05020.1">
    <molecule id="Q94BV7-1"/>
    <property type="protein sequence ID" value="AT4G05020.1"/>
    <property type="gene ID" value="AT4G05020"/>
</dbReference>
<dbReference type="KEGG" id="ath:AT4G05020"/>
<dbReference type="Araport" id="AT4G05020"/>
<dbReference type="TAIR" id="AT4G05020">
    <property type="gene designation" value="NDB2"/>
</dbReference>
<dbReference type="eggNOG" id="KOG2495">
    <property type="taxonomic scope" value="Eukaryota"/>
</dbReference>
<dbReference type="HOGENOM" id="CLU_021377_1_0_1"/>
<dbReference type="InParanoid" id="Q94BV7"/>
<dbReference type="OMA" id="HVDVLTN"/>
<dbReference type="PhylomeDB" id="Q94BV7"/>
<dbReference type="BioCyc" id="ARA:AT4G05020-MONOMER"/>
<dbReference type="CD-CODE" id="4299E36E">
    <property type="entry name" value="Nucleolus"/>
</dbReference>
<dbReference type="PRO" id="PR:Q94BV7"/>
<dbReference type="Proteomes" id="UP000006548">
    <property type="component" value="Chromosome 4"/>
</dbReference>
<dbReference type="ExpressionAtlas" id="Q94BV7">
    <property type="expression patterns" value="baseline and differential"/>
</dbReference>
<dbReference type="GO" id="GO:0005743">
    <property type="term" value="C:mitochondrial inner membrane"/>
    <property type="evidence" value="ECO:0007669"/>
    <property type="project" value="UniProtKB-SubCell"/>
</dbReference>
<dbReference type="GO" id="GO:0005758">
    <property type="term" value="C:mitochondrial intermembrane space"/>
    <property type="evidence" value="ECO:0000250"/>
    <property type="project" value="UniProtKB"/>
</dbReference>
<dbReference type="GO" id="GO:0005739">
    <property type="term" value="C:mitochondrion"/>
    <property type="evidence" value="ECO:0000314"/>
    <property type="project" value="UniProtKB"/>
</dbReference>
<dbReference type="GO" id="GO:0005777">
    <property type="term" value="C:peroxisome"/>
    <property type="evidence" value="ECO:0007669"/>
    <property type="project" value="UniProtKB-SubCell"/>
</dbReference>
<dbReference type="GO" id="GO:0005509">
    <property type="term" value="F:calcium ion binding"/>
    <property type="evidence" value="ECO:0007669"/>
    <property type="project" value="InterPro"/>
</dbReference>
<dbReference type="GO" id="GO:0050136">
    <property type="term" value="F:NADH:ubiquinone reductase (non-electrogenic) activity"/>
    <property type="evidence" value="ECO:0007669"/>
    <property type="project" value="UniProtKB-EC"/>
</dbReference>
<dbReference type="GO" id="GO:0016491">
    <property type="term" value="F:oxidoreductase activity"/>
    <property type="evidence" value="ECO:0000250"/>
    <property type="project" value="UniProtKB"/>
</dbReference>
<dbReference type="FunFam" id="3.50.50.100:FF:000002">
    <property type="entry name" value="External alternative NAD(P)H-ubiquinone oxidoreductase B1, mitochondrial"/>
    <property type="match status" value="1"/>
</dbReference>
<dbReference type="FunFam" id="3.50.50.100:FF:000008">
    <property type="entry name" value="External alternative NAD(P)H-ubiquinone oxidoreductase B1, mitochondrial"/>
    <property type="match status" value="1"/>
</dbReference>
<dbReference type="Gene3D" id="3.50.50.100">
    <property type="match status" value="2"/>
</dbReference>
<dbReference type="InterPro" id="IPR011992">
    <property type="entry name" value="EF-hand-dom_pair"/>
</dbReference>
<dbReference type="InterPro" id="IPR018247">
    <property type="entry name" value="EF_Hand_1_Ca_BS"/>
</dbReference>
<dbReference type="InterPro" id="IPR002048">
    <property type="entry name" value="EF_hand_dom"/>
</dbReference>
<dbReference type="InterPro" id="IPR036188">
    <property type="entry name" value="FAD/NAD-bd_sf"/>
</dbReference>
<dbReference type="InterPro" id="IPR023753">
    <property type="entry name" value="FAD/NAD-binding_dom"/>
</dbReference>
<dbReference type="InterPro" id="IPR045024">
    <property type="entry name" value="NDH-2"/>
</dbReference>
<dbReference type="InterPro" id="IPR054585">
    <property type="entry name" value="NDH2-like_C"/>
</dbReference>
<dbReference type="PANTHER" id="PTHR43706:SF47">
    <property type="entry name" value="EXTERNAL NADH-UBIQUINONE OXIDOREDUCTASE 1, MITOCHONDRIAL-RELATED"/>
    <property type="match status" value="1"/>
</dbReference>
<dbReference type="PANTHER" id="PTHR43706">
    <property type="entry name" value="NADH DEHYDROGENASE"/>
    <property type="match status" value="1"/>
</dbReference>
<dbReference type="Pfam" id="PF00036">
    <property type="entry name" value="EF-hand_1"/>
    <property type="match status" value="1"/>
</dbReference>
<dbReference type="Pfam" id="PF22366">
    <property type="entry name" value="NDH2_C"/>
    <property type="match status" value="1"/>
</dbReference>
<dbReference type="Pfam" id="PF07992">
    <property type="entry name" value="Pyr_redox_2"/>
    <property type="match status" value="1"/>
</dbReference>
<dbReference type="PRINTS" id="PR00368">
    <property type="entry name" value="FADPNR"/>
</dbReference>
<dbReference type="SMART" id="SM00054">
    <property type="entry name" value="EFh"/>
    <property type="match status" value="1"/>
</dbReference>
<dbReference type="SUPFAM" id="SSF47473">
    <property type="entry name" value="EF-hand"/>
    <property type="match status" value="1"/>
</dbReference>
<dbReference type="SUPFAM" id="SSF51905">
    <property type="entry name" value="FAD/NAD(P)-binding domain"/>
    <property type="match status" value="2"/>
</dbReference>
<dbReference type="PROSITE" id="PS00018">
    <property type="entry name" value="EF_HAND_1"/>
    <property type="match status" value="1"/>
</dbReference>
<dbReference type="PROSITE" id="PS50222">
    <property type="entry name" value="EF_HAND_2"/>
    <property type="match status" value="1"/>
</dbReference>
<comment type="function">
    <text evidence="1 7">Alternative NADH-ubiquinone oxidoreductase which catalyzes the oxidation of mitochondrial NADH does not translocate protons across the inner mitochondrial membrane (By similarity). Calcium-dependent NAD(P)H dehydrogenase; more efficient on NADH. Binds calcium ions.</text>
</comment>
<comment type="catalytic activity">
    <reaction>
        <text>a quinone + NADH + H(+) = a quinol + NAD(+)</text>
        <dbReference type="Rhea" id="RHEA:46160"/>
        <dbReference type="ChEBI" id="CHEBI:15378"/>
        <dbReference type="ChEBI" id="CHEBI:24646"/>
        <dbReference type="ChEBI" id="CHEBI:57540"/>
        <dbReference type="ChEBI" id="CHEBI:57945"/>
        <dbReference type="ChEBI" id="CHEBI:132124"/>
        <dbReference type="EC" id="1.6.5.9"/>
    </reaction>
</comment>
<comment type="catalytic activity">
    <reaction>
        <text>a ubiquinone + NADH + H(+) = a ubiquinol + NAD(+)</text>
        <dbReference type="Rhea" id="RHEA:23152"/>
        <dbReference type="Rhea" id="RHEA-COMP:9565"/>
        <dbReference type="Rhea" id="RHEA-COMP:9566"/>
        <dbReference type="ChEBI" id="CHEBI:15378"/>
        <dbReference type="ChEBI" id="CHEBI:16389"/>
        <dbReference type="ChEBI" id="CHEBI:17976"/>
        <dbReference type="ChEBI" id="CHEBI:57540"/>
        <dbReference type="ChEBI" id="CHEBI:57945"/>
    </reaction>
</comment>
<comment type="cofactor">
    <cofactor evidence="1">
        <name>FAD</name>
        <dbReference type="ChEBI" id="CHEBI:57692"/>
    </cofactor>
    <text evidence="1">Binds 1 FAD per subunit.</text>
</comment>
<comment type="activity regulation">
    <text evidence="7">NADPH oxidase activity is stimulated by calcium ions.</text>
</comment>
<comment type="biophysicochemical properties">
    <phDependence>
        <text evidence="7">Optimum pH is 6.8 with NADPH as substrate and 6.8-7.8 with NADH as substrate.</text>
    </phDependence>
</comment>
<comment type="subcellular location">
    <subcellularLocation>
        <location>Mitochondrion inner membrane</location>
        <topology>Peripheral membrane protein</topology>
        <orientation evidence="8">Intermembrane side</orientation>
    </subcellularLocation>
    <subcellularLocation>
        <location evidence="1">Peroxisome</location>
    </subcellularLocation>
</comment>
<comment type="alternative products">
    <event type="alternative splicing"/>
    <isoform>
        <id>Q94BV7-1</id>
        <name>1</name>
        <sequence type="displayed"/>
    </isoform>
    <text>A number of isoforms are produced. According to EST sequences.</text>
</comment>
<comment type="tissue specificity">
    <text evidence="4 6">Mostly expressed in seedlings and roots and, to a lower extent, in cotyledons, leaves, stems, buds and flowers.</text>
</comment>
<comment type="induction">
    <text evidence="5 6 9">Follows a circadian regulation; up-regulated in a diurnal manner. Accumulates in response to ammonium but repressed by nitrate. Induced by chloramphenicol (Chl), paraquat (Par), rotenone (Rot) and salicylic acid (SA).</text>
</comment>
<comment type="similarity">
    <text evidence="10">Belongs to the NADH dehydrogenase family.</text>
</comment>
<comment type="sequence caution" evidence="10">
    <conflict type="erroneous gene model prediction">
        <sequence resource="EMBL-CDS" id="AAD48975"/>
    </conflict>
</comment>
<comment type="sequence caution" evidence="10">
    <conflict type="erroneous gene model prediction">
        <sequence resource="EMBL-CDS" id="CAB81044"/>
    </conflict>
</comment>
<name>NDB2_ARATH</name>
<gene>
    <name type="primary">NDB2</name>
    <name type="ordered locus">At4g05020</name>
    <name type="ORF">T32N4.4</name>
</gene>
<feature type="transit peptide" description="Mitochondrion" evidence="2">
    <location>
        <begin position="1"/>
        <end position="38"/>
    </location>
</feature>
<feature type="chain" id="PRO_0000419506" description="External alternative NAD(P)H-ubiquinone oxidoreductase B2, mitochondrial">
    <location>
        <begin position="39"/>
        <end position="582"/>
    </location>
</feature>
<feature type="domain" description="EF-hand" evidence="3">
    <location>
        <begin position="379"/>
        <end position="414"/>
    </location>
</feature>
<feature type="short sequence motif" description="Microbody targeting signal" evidence="1">
    <location>
        <begin position="573"/>
        <end position="582"/>
    </location>
</feature>
<feature type="binding site" evidence="1">
    <location>
        <begin position="60"/>
        <end position="90"/>
    </location>
    <ligand>
        <name>FAD</name>
        <dbReference type="ChEBI" id="CHEBI:57692"/>
    </ligand>
</feature>
<feature type="binding site" evidence="1">
    <location>
        <begin position="223"/>
        <end position="259"/>
    </location>
    <ligand>
        <name>NAD(+)</name>
        <dbReference type="ChEBI" id="CHEBI:57540"/>
    </ligand>
</feature>
<feature type="binding site" evidence="3">
    <location>
        <position position="392"/>
    </location>
    <ligand>
        <name>Ca(2+)</name>
        <dbReference type="ChEBI" id="CHEBI:29108"/>
    </ligand>
</feature>
<feature type="binding site" evidence="3">
    <location>
        <position position="394"/>
    </location>
    <ligand>
        <name>Ca(2+)</name>
        <dbReference type="ChEBI" id="CHEBI:29108"/>
    </ligand>
</feature>
<feature type="binding site" evidence="3">
    <location>
        <position position="396"/>
    </location>
    <ligand>
        <name>Ca(2+)</name>
        <dbReference type="ChEBI" id="CHEBI:29108"/>
    </ligand>
</feature>
<feature type="binding site" evidence="3">
    <location>
        <position position="398"/>
    </location>
    <ligand>
        <name>Ca(2+)</name>
        <dbReference type="ChEBI" id="CHEBI:29108"/>
    </ligand>
</feature>
<feature type="binding site" evidence="3">
    <location>
        <position position="403"/>
    </location>
    <ligand>
        <name>Ca(2+)</name>
        <dbReference type="ChEBI" id="CHEBI:29108"/>
    </ligand>
</feature>
<evidence type="ECO:0000250" key="1"/>
<evidence type="ECO:0000255" key="2"/>
<evidence type="ECO:0000255" key="3">
    <source>
        <dbReference type="PROSITE-ProRule" id="PRU00448"/>
    </source>
</evidence>
<evidence type="ECO:0000269" key="4">
    <source>
    </source>
</evidence>
<evidence type="ECO:0000269" key="5">
    <source>
    </source>
</evidence>
<evidence type="ECO:0000269" key="6">
    <source>
    </source>
</evidence>
<evidence type="ECO:0000269" key="7">
    <source>
    </source>
</evidence>
<evidence type="ECO:0000269" key="8">
    <source>
    </source>
</evidence>
<evidence type="ECO:0000269" key="9">
    <source>
    </source>
</evidence>
<evidence type="ECO:0000305" key="10"/>
<organism>
    <name type="scientific">Arabidopsis thaliana</name>
    <name type="common">Mouse-ear cress</name>
    <dbReference type="NCBI Taxonomy" id="3702"/>
    <lineage>
        <taxon>Eukaryota</taxon>
        <taxon>Viridiplantae</taxon>
        <taxon>Streptophyta</taxon>
        <taxon>Embryophyta</taxon>
        <taxon>Tracheophyta</taxon>
        <taxon>Spermatophyta</taxon>
        <taxon>Magnoliopsida</taxon>
        <taxon>eudicotyledons</taxon>
        <taxon>Gunneridae</taxon>
        <taxon>Pentapetalae</taxon>
        <taxon>rosids</taxon>
        <taxon>malvids</taxon>
        <taxon>Brassicales</taxon>
        <taxon>Brassicaceae</taxon>
        <taxon>Camelineae</taxon>
        <taxon>Arabidopsis</taxon>
    </lineage>
</organism>